<keyword id="KW-1003">Cell membrane</keyword>
<keyword id="KW-0342">GTP-binding</keyword>
<keyword id="KW-0449">Lipoprotein</keyword>
<keyword id="KW-0472">Membrane</keyword>
<keyword id="KW-0547">Nucleotide-binding</keyword>
<keyword id="KW-0636">Prenylation</keyword>
<keyword id="KW-1185">Reference proteome</keyword>
<evidence type="ECO:0000250" key="1"/>
<evidence type="ECO:0000305" key="2"/>
<accession>Q54FK5</accession>
<comment type="subcellular location">
    <subcellularLocation>
        <location evidence="2">Cell membrane</location>
        <topology evidence="2">Lipid-anchor</topology>
        <orientation evidence="2">Cytoplasmic side</orientation>
    </subcellularLocation>
</comment>
<comment type="similarity">
    <text evidence="2">Belongs to the small GTPase superfamily. Rab family.</text>
</comment>
<proteinExistence type="inferred from homology"/>
<dbReference type="EMBL" id="AAFI02000171">
    <property type="protein sequence ID" value="EAL62028.1"/>
    <property type="molecule type" value="Genomic_DNA"/>
</dbReference>
<dbReference type="RefSeq" id="XP_635535.1">
    <property type="nucleotide sequence ID" value="XM_630443.1"/>
</dbReference>
<dbReference type="SMR" id="Q54FK5"/>
<dbReference type="FunCoup" id="Q54FK5">
    <property type="interactions" value="5"/>
</dbReference>
<dbReference type="STRING" id="44689.Q54FK5"/>
<dbReference type="PaxDb" id="44689-DDB0230018"/>
<dbReference type="EnsemblProtists" id="EAL62028">
    <property type="protein sequence ID" value="EAL62028"/>
    <property type="gene ID" value="DDB_G0290789"/>
</dbReference>
<dbReference type="GeneID" id="8627832"/>
<dbReference type="KEGG" id="ddi:DDB_G0290789"/>
<dbReference type="dictyBase" id="DDB_G0290789">
    <property type="gene designation" value="rabN1"/>
</dbReference>
<dbReference type="VEuPathDB" id="AmoebaDB:DDB_G0290789"/>
<dbReference type="eggNOG" id="KOG0394">
    <property type="taxonomic scope" value="Eukaryota"/>
</dbReference>
<dbReference type="HOGENOM" id="CLU_041217_10_6_1"/>
<dbReference type="InParanoid" id="Q54FK5"/>
<dbReference type="OMA" id="KWITELH"/>
<dbReference type="PhylomeDB" id="Q54FK5"/>
<dbReference type="Reactome" id="R-DDI-6798695">
    <property type="pathway name" value="Neutrophil degranulation"/>
</dbReference>
<dbReference type="Reactome" id="R-DDI-8854214">
    <property type="pathway name" value="TBC/RABGAPs"/>
</dbReference>
<dbReference type="Reactome" id="R-DDI-8873719">
    <property type="pathway name" value="RAB geranylgeranylation"/>
</dbReference>
<dbReference type="Reactome" id="R-DDI-8876198">
    <property type="pathway name" value="RAB GEFs exchange GTP for GDP on RABs"/>
</dbReference>
<dbReference type="Reactome" id="R-DDI-9706019">
    <property type="pathway name" value="RHOBTB3 ATPase cycle"/>
</dbReference>
<dbReference type="PRO" id="PR:Q54FK5"/>
<dbReference type="Proteomes" id="UP000002195">
    <property type="component" value="Chromosome 5"/>
</dbReference>
<dbReference type="GO" id="GO:0005770">
    <property type="term" value="C:late endosome"/>
    <property type="evidence" value="ECO:0000318"/>
    <property type="project" value="GO_Central"/>
</dbReference>
<dbReference type="GO" id="GO:0005764">
    <property type="term" value="C:lysosome"/>
    <property type="evidence" value="ECO:0000318"/>
    <property type="project" value="GO_Central"/>
</dbReference>
<dbReference type="GO" id="GO:0045335">
    <property type="term" value="C:phagocytic vesicle"/>
    <property type="evidence" value="ECO:0000318"/>
    <property type="project" value="GO_Central"/>
</dbReference>
<dbReference type="GO" id="GO:0005886">
    <property type="term" value="C:plasma membrane"/>
    <property type="evidence" value="ECO:0007669"/>
    <property type="project" value="UniProtKB-SubCell"/>
</dbReference>
<dbReference type="GO" id="GO:0005525">
    <property type="term" value="F:GTP binding"/>
    <property type="evidence" value="ECO:0007669"/>
    <property type="project" value="UniProtKB-KW"/>
</dbReference>
<dbReference type="GO" id="GO:0003924">
    <property type="term" value="F:GTPase activity"/>
    <property type="evidence" value="ECO:0007669"/>
    <property type="project" value="InterPro"/>
</dbReference>
<dbReference type="GO" id="GO:0006971">
    <property type="term" value="P:hypotonic response"/>
    <property type="evidence" value="ECO:0007007"/>
    <property type="project" value="dictyBase"/>
</dbReference>
<dbReference type="GO" id="GO:0090385">
    <property type="term" value="P:phagosome-lysosome fusion"/>
    <property type="evidence" value="ECO:0000318"/>
    <property type="project" value="GO_Central"/>
</dbReference>
<dbReference type="CDD" id="cd00154">
    <property type="entry name" value="Rab"/>
    <property type="match status" value="1"/>
</dbReference>
<dbReference type="FunFam" id="3.40.50.300:FF:003048">
    <property type="entry name" value="Ras-related protein RabN2"/>
    <property type="match status" value="1"/>
</dbReference>
<dbReference type="Gene3D" id="3.40.50.300">
    <property type="entry name" value="P-loop containing nucleotide triphosphate hydrolases"/>
    <property type="match status" value="1"/>
</dbReference>
<dbReference type="InterPro" id="IPR027417">
    <property type="entry name" value="P-loop_NTPase"/>
</dbReference>
<dbReference type="InterPro" id="IPR005225">
    <property type="entry name" value="Small_GTP-bd"/>
</dbReference>
<dbReference type="InterPro" id="IPR001806">
    <property type="entry name" value="Small_GTPase"/>
</dbReference>
<dbReference type="NCBIfam" id="TIGR00231">
    <property type="entry name" value="small_GTP"/>
    <property type="match status" value="1"/>
</dbReference>
<dbReference type="PANTHER" id="PTHR47981">
    <property type="entry name" value="RAB FAMILY"/>
    <property type="match status" value="1"/>
</dbReference>
<dbReference type="PANTHER" id="PTHR47981:SF20">
    <property type="entry name" value="RAS-RELATED PROTEIN RAB-7A"/>
    <property type="match status" value="1"/>
</dbReference>
<dbReference type="Pfam" id="PF00071">
    <property type="entry name" value="Ras"/>
    <property type="match status" value="1"/>
</dbReference>
<dbReference type="PRINTS" id="PR00449">
    <property type="entry name" value="RASTRNSFRMNG"/>
</dbReference>
<dbReference type="SMART" id="SM00175">
    <property type="entry name" value="RAB"/>
    <property type="match status" value="1"/>
</dbReference>
<dbReference type="SMART" id="SM00173">
    <property type="entry name" value="RAS"/>
    <property type="match status" value="1"/>
</dbReference>
<dbReference type="SMART" id="SM00174">
    <property type="entry name" value="RHO"/>
    <property type="match status" value="1"/>
</dbReference>
<dbReference type="SUPFAM" id="SSF52540">
    <property type="entry name" value="P-loop containing nucleoside triphosphate hydrolases"/>
    <property type="match status" value="1"/>
</dbReference>
<dbReference type="PROSITE" id="PS51419">
    <property type="entry name" value="RAB"/>
    <property type="match status" value="1"/>
</dbReference>
<gene>
    <name type="primary">rabN1</name>
    <name type="ORF">DDB_G0290789</name>
</gene>
<sequence>MEYKANKKLKIIMIGDYNSGKTAIFNEFAGRKFGIYTCPSTFDLFYKEIMIDDELVGYHFWDTAGQERFTSLNRHFYRNANCCVLCFDIHNEESFKNLDKWITELHSKCLENGLESEKLSPPFVLIGTKSDIPRTDKSISNERIEQWCKNIEDQRIIDKVHYFETSAKNSKNIKEPFNIISKFALNYFNSMQKLNESKLNPTLEISNNNNIKSSSC</sequence>
<protein>
    <recommendedName>
        <fullName>Ras-related protein RabN1</fullName>
    </recommendedName>
</protein>
<feature type="chain" id="PRO_0000332762" description="Ras-related protein RabN1">
    <location>
        <begin position="1"/>
        <end position="216"/>
    </location>
</feature>
<feature type="short sequence motif" description="Effector region" evidence="1">
    <location>
        <begin position="37"/>
        <end position="44"/>
    </location>
</feature>
<feature type="binding site" evidence="1">
    <location>
        <begin position="15"/>
        <end position="22"/>
    </location>
    <ligand>
        <name>GTP</name>
        <dbReference type="ChEBI" id="CHEBI:37565"/>
    </ligand>
</feature>
<feature type="binding site" evidence="1">
    <location>
        <begin position="62"/>
        <end position="66"/>
    </location>
    <ligand>
        <name>GTP</name>
        <dbReference type="ChEBI" id="CHEBI:37565"/>
    </ligand>
</feature>
<feature type="binding site" evidence="1">
    <location>
        <begin position="128"/>
        <end position="131"/>
    </location>
    <ligand>
        <name>GTP</name>
        <dbReference type="ChEBI" id="CHEBI:37565"/>
    </ligand>
</feature>
<feature type="lipid moiety-binding region" description="S-geranylgeranyl cysteine" evidence="1">
    <location>
        <position position="216"/>
    </location>
</feature>
<organism>
    <name type="scientific">Dictyostelium discoideum</name>
    <name type="common">Social amoeba</name>
    <dbReference type="NCBI Taxonomy" id="44689"/>
    <lineage>
        <taxon>Eukaryota</taxon>
        <taxon>Amoebozoa</taxon>
        <taxon>Evosea</taxon>
        <taxon>Eumycetozoa</taxon>
        <taxon>Dictyostelia</taxon>
        <taxon>Dictyosteliales</taxon>
        <taxon>Dictyosteliaceae</taxon>
        <taxon>Dictyostelium</taxon>
    </lineage>
</organism>
<reference key="1">
    <citation type="journal article" date="2005" name="Nature">
        <title>The genome of the social amoeba Dictyostelium discoideum.</title>
        <authorList>
            <person name="Eichinger L."/>
            <person name="Pachebat J.A."/>
            <person name="Gloeckner G."/>
            <person name="Rajandream M.A."/>
            <person name="Sucgang R."/>
            <person name="Berriman M."/>
            <person name="Song J."/>
            <person name="Olsen R."/>
            <person name="Szafranski K."/>
            <person name="Xu Q."/>
            <person name="Tunggal B."/>
            <person name="Kummerfeld S."/>
            <person name="Madera M."/>
            <person name="Konfortov B.A."/>
            <person name="Rivero F."/>
            <person name="Bankier A.T."/>
            <person name="Lehmann R."/>
            <person name="Hamlin N."/>
            <person name="Davies R."/>
            <person name="Gaudet P."/>
            <person name="Fey P."/>
            <person name="Pilcher K."/>
            <person name="Chen G."/>
            <person name="Saunders D."/>
            <person name="Sodergren E.J."/>
            <person name="Davis P."/>
            <person name="Kerhornou A."/>
            <person name="Nie X."/>
            <person name="Hall N."/>
            <person name="Anjard C."/>
            <person name="Hemphill L."/>
            <person name="Bason N."/>
            <person name="Farbrother P."/>
            <person name="Desany B."/>
            <person name="Just E."/>
            <person name="Morio T."/>
            <person name="Rost R."/>
            <person name="Churcher C.M."/>
            <person name="Cooper J."/>
            <person name="Haydock S."/>
            <person name="van Driessche N."/>
            <person name="Cronin A."/>
            <person name="Goodhead I."/>
            <person name="Muzny D.M."/>
            <person name="Mourier T."/>
            <person name="Pain A."/>
            <person name="Lu M."/>
            <person name="Harper D."/>
            <person name="Lindsay R."/>
            <person name="Hauser H."/>
            <person name="James K.D."/>
            <person name="Quiles M."/>
            <person name="Madan Babu M."/>
            <person name="Saito T."/>
            <person name="Buchrieser C."/>
            <person name="Wardroper A."/>
            <person name="Felder M."/>
            <person name="Thangavelu M."/>
            <person name="Johnson D."/>
            <person name="Knights A."/>
            <person name="Loulseged H."/>
            <person name="Mungall K.L."/>
            <person name="Oliver K."/>
            <person name="Price C."/>
            <person name="Quail M.A."/>
            <person name="Urushihara H."/>
            <person name="Hernandez J."/>
            <person name="Rabbinowitsch E."/>
            <person name="Steffen D."/>
            <person name="Sanders M."/>
            <person name="Ma J."/>
            <person name="Kohara Y."/>
            <person name="Sharp S."/>
            <person name="Simmonds M.N."/>
            <person name="Spiegler S."/>
            <person name="Tivey A."/>
            <person name="Sugano S."/>
            <person name="White B."/>
            <person name="Walker D."/>
            <person name="Woodward J.R."/>
            <person name="Winckler T."/>
            <person name="Tanaka Y."/>
            <person name="Shaulsky G."/>
            <person name="Schleicher M."/>
            <person name="Weinstock G.M."/>
            <person name="Rosenthal A."/>
            <person name="Cox E.C."/>
            <person name="Chisholm R.L."/>
            <person name="Gibbs R.A."/>
            <person name="Loomis W.F."/>
            <person name="Platzer M."/>
            <person name="Kay R.R."/>
            <person name="Williams J.G."/>
            <person name="Dear P.H."/>
            <person name="Noegel A.A."/>
            <person name="Barrell B.G."/>
            <person name="Kuspa A."/>
        </authorList>
    </citation>
    <scope>NUCLEOTIDE SEQUENCE [LARGE SCALE GENOMIC DNA]</scope>
    <source>
        <strain>AX4</strain>
    </source>
</reference>
<name>RABN1_DICDI</name>